<sequence>MARTKQTARKTVGGDINSRISEKRAKSDNSKNIDLKKVHRYKPGTVALREIRKYQKSTNLLIRKLPFQRLVRELAQDYKSDLRFQNSAVLALQEASESYLVNLFEDTNLCAIHAKRVTIMPKDIYLARRIRGEMIF</sequence>
<protein>
    <recommendedName>
        <fullName>Histone H3</fullName>
    </recommendedName>
</protein>
<geneLocation type="nucleomorph"/>
<evidence type="ECO:0000250" key="1"/>
<evidence type="ECO:0000305" key="2"/>
<keyword id="KW-0158">Chromosome</keyword>
<keyword id="KW-0238">DNA-binding</keyword>
<keyword id="KW-0542">Nucleomorph</keyword>
<keyword id="KW-0544">Nucleosome core</keyword>
<organism>
    <name type="scientific">Guillardia theta</name>
    <name type="common">Cryptophyte</name>
    <name type="synonym">Cryptomonas phi</name>
    <dbReference type="NCBI Taxonomy" id="55529"/>
    <lineage>
        <taxon>Eukaryota</taxon>
        <taxon>Cryptophyceae</taxon>
        <taxon>Pyrenomonadales</taxon>
        <taxon>Geminigeraceae</taxon>
        <taxon>Guillardia</taxon>
    </lineage>
</organism>
<feature type="initiator methionine" description="Removed" evidence="1">
    <location>
        <position position="1"/>
    </location>
</feature>
<feature type="chain" id="PRO_0000221278" description="Histone H3">
    <location>
        <begin position="2"/>
        <end position="136"/>
    </location>
</feature>
<reference key="1">
    <citation type="journal article" date="2001" name="Nature">
        <title>The highly reduced genome of an enslaved algal nucleus.</title>
        <authorList>
            <person name="Douglas S.E."/>
            <person name="Zauner S."/>
            <person name="Fraunholz M."/>
            <person name="Beaton M."/>
            <person name="Penny S.L."/>
            <person name="Deng L.-T."/>
            <person name="Wu X."/>
            <person name="Reith M.E."/>
            <person name="Cavalier-Smith T."/>
            <person name="Maier U.-G."/>
        </authorList>
    </citation>
    <scope>NUCLEOTIDE SEQUENCE [LARGE SCALE GENOMIC DNA]</scope>
</reference>
<accession>Q98RY4</accession>
<comment type="function">
    <text>Core component of nucleosome. Nucleosomes wrap and compact DNA into chromatin, limiting DNA accessibility to the cellular machineries which require DNA as a template. Histones thereby play a central role in transcription regulation, DNA repair, DNA replication and chromosomal stability. DNA accessibility is regulated via a complex set of post-translational modifications of histones, also called histone code, and nucleosome remodeling.</text>
</comment>
<comment type="subunit">
    <text>The nucleosome is a histone octamer containing two molecules each of H2A, H2B, H3 and H4 assembled in one H3-H4 heterotetramer and two H2A-H2B heterodimers. The octamer wraps approximately 147 bp of DNA.</text>
</comment>
<comment type="subcellular location">
    <subcellularLocation>
        <location evidence="1">Nucleomorph</location>
    </subcellularLocation>
    <subcellularLocation>
        <location evidence="1">Chromosome</location>
    </subcellularLocation>
</comment>
<comment type="similarity">
    <text evidence="2">Belongs to the histone H3 family.</text>
</comment>
<name>H3_GUITH</name>
<proteinExistence type="inferred from homology"/>
<dbReference type="EMBL" id="AF165818">
    <property type="protein sequence ID" value="AAK39816.1"/>
    <property type="molecule type" value="Genomic_DNA"/>
</dbReference>
<dbReference type="PIR" id="E90085">
    <property type="entry name" value="E90085"/>
</dbReference>
<dbReference type="RefSeq" id="XP_001713521.1">
    <property type="nucleotide sequence ID" value="XM_001713469.1"/>
</dbReference>
<dbReference type="SMR" id="Q98RY4"/>
<dbReference type="GeneID" id="857304"/>
<dbReference type="Proteomes" id="UP000242167">
    <property type="component" value="Chromosome 1"/>
</dbReference>
<dbReference type="GO" id="GO:0000786">
    <property type="term" value="C:nucleosome"/>
    <property type="evidence" value="ECO:0007669"/>
    <property type="project" value="UniProtKB-KW"/>
</dbReference>
<dbReference type="GO" id="GO:0003677">
    <property type="term" value="F:DNA binding"/>
    <property type="evidence" value="ECO:0007669"/>
    <property type="project" value="UniProtKB-KW"/>
</dbReference>
<dbReference type="GO" id="GO:0046982">
    <property type="term" value="F:protein heterodimerization activity"/>
    <property type="evidence" value="ECO:0007669"/>
    <property type="project" value="InterPro"/>
</dbReference>
<dbReference type="GO" id="GO:0030527">
    <property type="term" value="F:structural constituent of chromatin"/>
    <property type="evidence" value="ECO:0007669"/>
    <property type="project" value="InterPro"/>
</dbReference>
<dbReference type="CDD" id="cd22911">
    <property type="entry name" value="HFD_H3"/>
    <property type="match status" value="1"/>
</dbReference>
<dbReference type="FunFam" id="1.10.20.10:FF:000001">
    <property type="entry name" value="Histone H3"/>
    <property type="match status" value="1"/>
</dbReference>
<dbReference type="Gene3D" id="1.10.20.10">
    <property type="entry name" value="Histone, subunit A"/>
    <property type="match status" value="1"/>
</dbReference>
<dbReference type="InterPro" id="IPR009072">
    <property type="entry name" value="Histone-fold"/>
</dbReference>
<dbReference type="InterPro" id="IPR007125">
    <property type="entry name" value="Histone_H2A/H2B/H3"/>
</dbReference>
<dbReference type="InterPro" id="IPR000164">
    <property type="entry name" value="Histone_H3/CENP-A"/>
</dbReference>
<dbReference type="PANTHER" id="PTHR11426">
    <property type="entry name" value="HISTONE H3"/>
    <property type="match status" value="1"/>
</dbReference>
<dbReference type="Pfam" id="PF00125">
    <property type="entry name" value="Histone"/>
    <property type="match status" value="1"/>
</dbReference>
<dbReference type="PRINTS" id="PR00622">
    <property type="entry name" value="HISTONEH3"/>
</dbReference>
<dbReference type="SMART" id="SM00428">
    <property type="entry name" value="H3"/>
    <property type="match status" value="1"/>
</dbReference>
<dbReference type="SUPFAM" id="SSF47113">
    <property type="entry name" value="Histone-fold"/>
    <property type="match status" value="1"/>
</dbReference>